<sequence>MVREEIAVATGAPRWKCVESRIDSKRLYYSRFILSPLMKGQADMIGIAMRRALLGEIEGTCITRVKSEKVPHEFSTIVGIEESVHEIVMNLKEIVLRSNLYGTLDASICIRGPRYVTAQDIILPPSVEIVDATQHIANLTERVDLCIKLQIERDRGYSMKTPHNDEDGSYPIDAIFMPVRNANHSVHSYGNGNEKQEILFIEIWTNGSLTPKEALYEASRNLIDLFIPFLHAEEREIHLEDNANGVPLALFTFHDEFAITNIRKNKKKMALKSIFIDQSELPSKTYNCLKKSNIHTLLDLLNNSQEDLLKIEHFCMEDVKRILDILQKHFGFDLPKNGK</sequence>
<reference key="1">
    <citation type="journal article" date="2006" name="BMC Evol. Biol.">
        <title>Complete plastid genome sequences of Drimys, Liriodendron, and Piper: implications for the phylogenetic relationships of magnoliids.</title>
        <authorList>
            <person name="Cai Z."/>
            <person name="Penaflor C."/>
            <person name="Kuehl J.V."/>
            <person name="Leebens-Mack J."/>
            <person name="Carlson J.E."/>
            <person name="dePamphilis C.W."/>
            <person name="Boore J.L."/>
            <person name="Jansen R.K."/>
        </authorList>
    </citation>
    <scope>NUCLEOTIDE SEQUENCE [LARGE SCALE GENOMIC DNA]</scope>
</reference>
<keyword id="KW-0150">Chloroplast</keyword>
<keyword id="KW-0240">DNA-directed RNA polymerase</keyword>
<keyword id="KW-0548">Nucleotidyltransferase</keyword>
<keyword id="KW-0934">Plastid</keyword>
<keyword id="KW-0804">Transcription</keyword>
<keyword id="KW-0808">Transferase</keyword>
<protein>
    <recommendedName>
        <fullName evidence="1">DNA-directed RNA polymerase subunit alpha</fullName>
        <shortName evidence="1">PEP</shortName>
        <ecNumber evidence="1">2.7.7.6</ecNumber>
    </recommendedName>
    <alternativeName>
        <fullName evidence="1">Plastid-encoded RNA polymerase subunit alpha</fullName>
        <shortName evidence="1">RNA polymerase subunit alpha</shortName>
    </alternativeName>
</protein>
<geneLocation type="chloroplast"/>
<accession>Q06GM8</accession>
<dbReference type="EC" id="2.7.7.6" evidence="1"/>
<dbReference type="EMBL" id="DQ887677">
    <property type="protein sequence ID" value="ABI14503.1"/>
    <property type="molecule type" value="Genomic_DNA"/>
</dbReference>
<dbReference type="RefSeq" id="YP_784505.1">
    <property type="nucleotide sequence ID" value="NC_008457.1"/>
</dbReference>
<dbReference type="SMR" id="Q06GM8"/>
<dbReference type="GeneID" id="4363650"/>
<dbReference type="GO" id="GO:0009507">
    <property type="term" value="C:chloroplast"/>
    <property type="evidence" value="ECO:0007669"/>
    <property type="project" value="UniProtKB-SubCell"/>
</dbReference>
<dbReference type="GO" id="GO:0000428">
    <property type="term" value="C:DNA-directed RNA polymerase complex"/>
    <property type="evidence" value="ECO:0007669"/>
    <property type="project" value="UniProtKB-KW"/>
</dbReference>
<dbReference type="GO" id="GO:0005739">
    <property type="term" value="C:mitochondrion"/>
    <property type="evidence" value="ECO:0007669"/>
    <property type="project" value="GOC"/>
</dbReference>
<dbReference type="GO" id="GO:0003677">
    <property type="term" value="F:DNA binding"/>
    <property type="evidence" value="ECO:0007669"/>
    <property type="project" value="UniProtKB-UniRule"/>
</dbReference>
<dbReference type="GO" id="GO:0003899">
    <property type="term" value="F:DNA-directed RNA polymerase activity"/>
    <property type="evidence" value="ECO:0007669"/>
    <property type="project" value="UniProtKB-UniRule"/>
</dbReference>
<dbReference type="GO" id="GO:0046983">
    <property type="term" value="F:protein dimerization activity"/>
    <property type="evidence" value="ECO:0007669"/>
    <property type="project" value="InterPro"/>
</dbReference>
<dbReference type="GO" id="GO:0006351">
    <property type="term" value="P:DNA-templated transcription"/>
    <property type="evidence" value="ECO:0007669"/>
    <property type="project" value="UniProtKB-UniRule"/>
</dbReference>
<dbReference type="CDD" id="cd06928">
    <property type="entry name" value="RNAP_alpha_NTD"/>
    <property type="match status" value="1"/>
</dbReference>
<dbReference type="FunFam" id="2.170.120.12:FF:000001">
    <property type="entry name" value="DNA-directed RNA polymerase subunit alpha"/>
    <property type="match status" value="1"/>
</dbReference>
<dbReference type="Gene3D" id="1.10.150.20">
    <property type="entry name" value="5' to 3' exonuclease, C-terminal subdomain"/>
    <property type="match status" value="1"/>
</dbReference>
<dbReference type="Gene3D" id="2.170.120.12">
    <property type="entry name" value="DNA-directed RNA polymerase, insert domain"/>
    <property type="match status" value="1"/>
</dbReference>
<dbReference type="Gene3D" id="3.30.1360.10">
    <property type="entry name" value="RNA polymerase, RBP11-like subunit"/>
    <property type="match status" value="1"/>
</dbReference>
<dbReference type="HAMAP" id="MF_00059">
    <property type="entry name" value="RNApol_bact_RpoA"/>
    <property type="match status" value="1"/>
</dbReference>
<dbReference type="InterPro" id="IPR011262">
    <property type="entry name" value="DNA-dir_RNA_pol_insert"/>
</dbReference>
<dbReference type="InterPro" id="IPR011263">
    <property type="entry name" value="DNA-dir_RNA_pol_RpoA/D/Rpb3"/>
</dbReference>
<dbReference type="InterPro" id="IPR011773">
    <property type="entry name" value="DNA-dir_RpoA"/>
</dbReference>
<dbReference type="InterPro" id="IPR036603">
    <property type="entry name" value="RBP11-like"/>
</dbReference>
<dbReference type="InterPro" id="IPR011260">
    <property type="entry name" value="RNAP_asu_C"/>
</dbReference>
<dbReference type="InterPro" id="IPR036643">
    <property type="entry name" value="RNApol_insert_sf"/>
</dbReference>
<dbReference type="NCBIfam" id="TIGR02027">
    <property type="entry name" value="rpoA"/>
    <property type="match status" value="1"/>
</dbReference>
<dbReference type="Pfam" id="PF01000">
    <property type="entry name" value="RNA_pol_A_bac"/>
    <property type="match status" value="1"/>
</dbReference>
<dbReference type="Pfam" id="PF03118">
    <property type="entry name" value="RNA_pol_A_CTD"/>
    <property type="match status" value="1"/>
</dbReference>
<dbReference type="Pfam" id="PF01193">
    <property type="entry name" value="RNA_pol_L"/>
    <property type="match status" value="1"/>
</dbReference>
<dbReference type="SMART" id="SM00662">
    <property type="entry name" value="RPOLD"/>
    <property type="match status" value="1"/>
</dbReference>
<dbReference type="SUPFAM" id="SSF47789">
    <property type="entry name" value="C-terminal domain of RNA polymerase alpha subunit"/>
    <property type="match status" value="1"/>
</dbReference>
<dbReference type="SUPFAM" id="SSF56553">
    <property type="entry name" value="Insert subdomain of RNA polymerase alpha subunit"/>
    <property type="match status" value="1"/>
</dbReference>
<dbReference type="SUPFAM" id="SSF55257">
    <property type="entry name" value="RBP11-like subunits of RNA polymerase"/>
    <property type="match status" value="1"/>
</dbReference>
<gene>
    <name evidence="1" type="primary">rpoA</name>
</gene>
<proteinExistence type="inferred from homology"/>
<organism>
    <name type="scientific">Piper cenocladum</name>
    <name type="common">Ant piper</name>
    <dbReference type="NCBI Taxonomy" id="398741"/>
    <lineage>
        <taxon>Eukaryota</taxon>
        <taxon>Viridiplantae</taxon>
        <taxon>Streptophyta</taxon>
        <taxon>Embryophyta</taxon>
        <taxon>Tracheophyta</taxon>
        <taxon>Spermatophyta</taxon>
        <taxon>Magnoliopsida</taxon>
        <taxon>Magnoliidae</taxon>
        <taxon>Piperales</taxon>
        <taxon>Piperaceae</taxon>
        <taxon>Piper</taxon>
    </lineage>
</organism>
<comment type="function">
    <text evidence="1">DNA-dependent RNA polymerase catalyzes the transcription of DNA into RNA using the four ribonucleoside triphosphates as substrates.</text>
</comment>
<comment type="catalytic activity">
    <reaction evidence="1">
        <text>RNA(n) + a ribonucleoside 5'-triphosphate = RNA(n+1) + diphosphate</text>
        <dbReference type="Rhea" id="RHEA:21248"/>
        <dbReference type="Rhea" id="RHEA-COMP:14527"/>
        <dbReference type="Rhea" id="RHEA-COMP:17342"/>
        <dbReference type="ChEBI" id="CHEBI:33019"/>
        <dbReference type="ChEBI" id="CHEBI:61557"/>
        <dbReference type="ChEBI" id="CHEBI:140395"/>
        <dbReference type="EC" id="2.7.7.6"/>
    </reaction>
</comment>
<comment type="subunit">
    <text evidence="1">In plastids the minimal PEP RNA polymerase catalytic core is composed of four subunits: alpha, beta, beta', and beta''. When a (nuclear-encoded) sigma factor is associated with the core the holoenzyme is formed, which can initiate transcription.</text>
</comment>
<comment type="subcellular location">
    <subcellularLocation>
        <location>Plastid</location>
        <location>Chloroplast</location>
    </subcellularLocation>
</comment>
<comment type="domain">
    <text evidence="1">The N-terminal domain is essential for RNAP assembly and basal transcription, whereas the C-terminal domain is involved in interaction with transcriptional regulators and with upstream promoter elements.</text>
</comment>
<comment type="similarity">
    <text evidence="1">Belongs to the RNA polymerase alpha chain family.</text>
</comment>
<feature type="chain" id="PRO_0000275693" description="DNA-directed RNA polymerase subunit alpha">
    <location>
        <begin position="1"/>
        <end position="339"/>
    </location>
</feature>
<feature type="region of interest" description="Alpha N-terminal domain (alpha-NTD)" evidence="1">
    <location>
        <begin position="1"/>
        <end position="233"/>
    </location>
</feature>
<feature type="region of interest" description="Alpha C-terminal domain (alpha-CTD)" evidence="1">
    <location>
        <begin position="267"/>
        <end position="339"/>
    </location>
</feature>
<name>RPOA_PIPCE</name>
<evidence type="ECO:0000255" key="1">
    <source>
        <dbReference type="HAMAP-Rule" id="MF_00059"/>
    </source>
</evidence>